<comment type="function">
    <text evidence="3 5 6 7 8 9">Plasma membrane signaling mucin that promotes activation of the MAPK for the filamentous growth pathway. Partially redundant with the SHO1 osmosensing branch for the activation of STE11.</text>
</comment>
<comment type="subunit">
    <text evidence="6">Interacts with CDC42 and SHO1.</text>
</comment>
<comment type="interaction">
    <interactant intactId="EBI-11328">
        <id>P32334</id>
    </interactant>
    <interactant intactId="EBI-2068557">
        <id>Q06810</id>
        <label>OPY2</label>
    </interactant>
    <organismsDiffer>false</organismsDiffer>
    <experiments>3</experiments>
</comment>
<comment type="subcellular location">
    <subcellularLocation>
        <location evidence="6">Cell membrane</location>
        <topology evidence="6">Single-pass membrane protein</topology>
    </subcellularLocation>
    <text>localized to polarized sites on the cell surface.</text>
</comment>
<comment type="PTM">
    <text evidence="10">O-glycosylated in the Ser/Thr-rich regions.</text>
</comment>
<comment type="miscellaneous">
    <text evidence="4">Present with 1320 molecules/cell in log phase SD medium.</text>
</comment>
<comment type="similarity">
    <text evidence="10">Belongs to the HKR1/MSB2 family.</text>
</comment>
<organism>
    <name type="scientific">Saccharomyces cerevisiae (strain ATCC 204508 / S288c)</name>
    <name type="common">Baker's yeast</name>
    <dbReference type="NCBI Taxonomy" id="559292"/>
    <lineage>
        <taxon>Eukaryota</taxon>
        <taxon>Fungi</taxon>
        <taxon>Dikarya</taxon>
        <taxon>Ascomycota</taxon>
        <taxon>Saccharomycotina</taxon>
        <taxon>Saccharomycetes</taxon>
        <taxon>Saccharomycetales</taxon>
        <taxon>Saccharomycetaceae</taxon>
        <taxon>Saccharomyces</taxon>
    </lineage>
</organism>
<sequence>MQFPFACLLSTLVISGSLARASPFDFIFGNGTQQAQSQSESQGQVSFTNEASQDSSTTSLVTAYSQGVHSHQSATIVSATISSLPSTWYDASSTSQTSVSYASQESDYAVNQNSWSASTNQLPSTSTTSYYAPTFSTSADFAASSVNAASDVSTASVPIDTSANSIPFTTTSNIETTTSAPLTSDTPLISTSTMSAADNVFSSANPISASLTTTDSSESFDQTSTAGAIPVQSSADFSSSSEILVQSSADFSSPSSPTTTDISLSAAPLQTSESSSFTTASAALPVSSTDVDGSSASPVVSMSAAGQIASSSSTDNPTMSETFSLTSTEVDGSDVSSTVSALLSAPFLQTSTSNSFSIVSPSVSFVPSQSSSDVASSSTANVVSSSFSDIPPQTSTSGSVVSVAQSASALAFQSSTEVYGASASSTMSSLLSTTSLQSTTLDSSSLASSSASSSDLTDYGVSSTASIPLLSASEQASTSSSFSVVSPSVSFVPSQSSSDVASTSAPSVVSSSFSYTSLQAGGSSMTNPSSSTIVYSSSTGSSEESAASTASATLSGSSSTYMAGNLQSQPPSTSSLLSESQATSTSAVLASSSVSTTSPYTTAGGASTEASSLISSTSAETSQVSYSQSTTALQTSSFASSSTTEGSETSSQGFSTSSVLVQMPSSISSEFSPSQTTTQMNSASSSSQYTISSTGILSQVSDTSVSYTTSSSSVSQVSDTPVSYTTSSSSVSQVSDTPVSYTTSSSSVSQVSDTPVSYTTSSSSVSQVSDTPVSYTTSSSSVSQVSDTSVPSTSSRSSVSQVSDTPVPSTSSRSSVSQTSSSLQPTTTSSQRFTISTHGALSESSSVSQQASEITSSINATASEYHSIQTTAATQSTTLSFTDANSSSASAPLEVATSTPTPSSKASSLLLTPSTSSLSQVATNTNVQTSLTTESTTVLEPSTTNSSSTFSLVTSSDNNWWIPTELITQAPEAASTASSTVGGTQTMTLPHAIAAATQVPEPEGYTLITIGFKKALNYEFVVSEPKSSAQIFGYLPEALNTPFKNVFTNITVLQIVPLQDDSLNYLVSVAEVYFPTAEIEELSNLITNSSSAFYTDGMGTAKSMAAMVDSSIPLTGLLHDSNSNSGGSSDGSSSSNSNSGSSGSGSNSNSGVSSSSGNSYQDAGTLEYSSKSNSNVSTSSKSKKKIIGLVIGVVVGGCLYILFMIFAFKYIIRRRIQSQEIIKNPEISSISSSEFGGEKNYNNEKRMSVQESITQSMRIQNWMDDSYYGHGLTNNDSTPTRHNTSSSIPKISRPIASQNSLGWNEV</sequence>
<name>MSB2_YEAST</name>
<keyword id="KW-1003">Cell membrane</keyword>
<keyword id="KW-0325">Glycoprotein</keyword>
<keyword id="KW-0472">Membrane</keyword>
<keyword id="KW-0597">Phosphoprotein</keyword>
<keyword id="KW-1185">Reference proteome</keyword>
<keyword id="KW-0677">Repeat</keyword>
<keyword id="KW-0732">Signal</keyword>
<keyword id="KW-0812">Transmembrane</keyword>
<keyword id="KW-1133">Transmembrane helix</keyword>
<protein>
    <recommendedName>
        <fullName>Signaling mucin MSB2</fullName>
    </recommendedName>
    <alternativeName>
        <fullName>Multicopy suppressor of bud emergence 2</fullName>
    </alternativeName>
    <alternativeName>
        <fullName>Osmosensor MSB2</fullName>
    </alternativeName>
</protein>
<dbReference type="EMBL" id="M77354">
    <property type="protein sequence ID" value="AAA34798.1"/>
    <property type="molecule type" value="Genomic_DNA"/>
</dbReference>
<dbReference type="EMBL" id="Z72799">
    <property type="protein sequence ID" value="CAA96997.1"/>
    <property type="molecule type" value="Genomic_DNA"/>
</dbReference>
<dbReference type="EMBL" id="BK006941">
    <property type="protein sequence ID" value="DAA08111.1"/>
    <property type="molecule type" value="Genomic_DNA"/>
</dbReference>
<dbReference type="PIR" id="S25370">
    <property type="entry name" value="S25370"/>
</dbReference>
<dbReference type="RefSeq" id="NP_011528.3">
    <property type="nucleotide sequence ID" value="NM_001181143.3"/>
</dbReference>
<dbReference type="SMR" id="P32334"/>
<dbReference type="BioGRID" id="33257">
    <property type="interactions" value="108"/>
</dbReference>
<dbReference type="ComplexPortal" id="CPX-1302">
    <property type="entry name" value="OPY2-MSB2 osmosensory complex"/>
</dbReference>
<dbReference type="DIP" id="DIP-1455N"/>
<dbReference type="FunCoup" id="P32334">
    <property type="interactions" value="202"/>
</dbReference>
<dbReference type="IntAct" id="P32334">
    <property type="interactions" value="13"/>
</dbReference>
<dbReference type="MINT" id="P32334"/>
<dbReference type="STRING" id="4932.YGR014W"/>
<dbReference type="GlyCosmos" id="P32334">
    <property type="glycosylation" value="7 sites, No reported glycans"/>
</dbReference>
<dbReference type="GlyGen" id="P32334">
    <property type="glycosylation" value="8 sites"/>
</dbReference>
<dbReference type="iPTMnet" id="P32334"/>
<dbReference type="PaxDb" id="4932-YGR014W"/>
<dbReference type="PeptideAtlas" id="P32334"/>
<dbReference type="EnsemblFungi" id="YGR014W_mRNA">
    <property type="protein sequence ID" value="YGR014W"/>
    <property type="gene ID" value="YGR014W"/>
</dbReference>
<dbReference type="GeneID" id="852897"/>
<dbReference type="KEGG" id="sce:YGR014W"/>
<dbReference type="AGR" id="SGD:S000003246"/>
<dbReference type="SGD" id="S000003246">
    <property type="gene designation" value="MSB2"/>
</dbReference>
<dbReference type="VEuPathDB" id="FungiDB:YGR014W"/>
<dbReference type="eggNOG" id="ENOG502QW7T">
    <property type="taxonomic scope" value="Eukaryota"/>
</dbReference>
<dbReference type="HOGENOM" id="CLU_262646_0_0_1"/>
<dbReference type="InParanoid" id="P32334"/>
<dbReference type="OMA" id="WIPTELI"/>
<dbReference type="OrthoDB" id="3366093at2759"/>
<dbReference type="BioCyc" id="YEAST:G3O-30741-MONOMER"/>
<dbReference type="BioGRID-ORCS" id="852897">
    <property type="hits" value="2 hits in 10 CRISPR screens"/>
</dbReference>
<dbReference type="PRO" id="PR:P32334"/>
<dbReference type="Proteomes" id="UP000002311">
    <property type="component" value="Chromosome VII"/>
</dbReference>
<dbReference type="RNAct" id="P32334">
    <property type="molecule type" value="protein"/>
</dbReference>
<dbReference type="GO" id="GO:0009986">
    <property type="term" value="C:cell surface"/>
    <property type="evidence" value="ECO:0000318"/>
    <property type="project" value="GO_Central"/>
</dbReference>
<dbReference type="GO" id="GO:0005576">
    <property type="term" value="C:extracellular region"/>
    <property type="evidence" value="ECO:0000314"/>
    <property type="project" value="SGD"/>
</dbReference>
<dbReference type="GO" id="GO:0005886">
    <property type="term" value="C:plasma membrane"/>
    <property type="evidence" value="ECO:0000315"/>
    <property type="project" value="SGD"/>
</dbReference>
<dbReference type="GO" id="GO:0030427">
    <property type="term" value="C:site of polarized growth"/>
    <property type="evidence" value="ECO:0000314"/>
    <property type="project" value="SGD"/>
</dbReference>
<dbReference type="GO" id="GO:0005034">
    <property type="term" value="F:osmosensor activity"/>
    <property type="evidence" value="ECO:0000315"/>
    <property type="project" value="SGD"/>
</dbReference>
<dbReference type="GO" id="GO:0000282">
    <property type="term" value="P:cellular bud site selection"/>
    <property type="evidence" value="ECO:0000318"/>
    <property type="project" value="GO_Central"/>
</dbReference>
<dbReference type="GO" id="GO:0030010">
    <property type="term" value="P:establishment of cell polarity"/>
    <property type="evidence" value="ECO:0000315"/>
    <property type="project" value="SGD"/>
</dbReference>
<dbReference type="GO" id="GO:0031505">
    <property type="term" value="P:fungal-type cell wall organization"/>
    <property type="evidence" value="ECO:0000318"/>
    <property type="project" value="GO_Central"/>
</dbReference>
<dbReference type="GO" id="GO:0006972">
    <property type="term" value="P:hyperosmotic response"/>
    <property type="evidence" value="ECO:0000316"/>
    <property type="project" value="SGD"/>
</dbReference>
<dbReference type="GO" id="GO:0007232">
    <property type="term" value="P:osmosensory signaling pathway via Sho1 osmosensor"/>
    <property type="evidence" value="ECO:0000314"/>
    <property type="project" value="ComplexPortal"/>
</dbReference>
<dbReference type="GO" id="GO:0006970">
    <property type="term" value="P:response to osmotic stress"/>
    <property type="evidence" value="ECO:0000315"/>
    <property type="project" value="SGD"/>
</dbReference>
<dbReference type="GO" id="GO:0001402">
    <property type="term" value="P:signal transduction involved in filamentous growth"/>
    <property type="evidence" value="ECO:0000315"/>
    <property type="project" value="SGD"/>
</dbReference>
<dbReference type="InterPro" id="IPR039295">
    <property type="entry name" value="MSB2"/>
</dbReference>
<dbReference type="PANTHER" id="PTHR35778">
    <property type="entry name" value="SIGNALING MUCIN HKR1-RELATED"/>
    <property type="match status" value="1"/>
</dbReference>
<dbReference type="PANTHER" id="PTHR35778:SF1">
    <property type="entry name" value="SIGNALING MUCIN HKR1-RELATED"/>
    <property type="match status" value="1"/>
</dbReference>
<gene>
    <name type="primary">MSB2</name>
    <name type="ordered locus">YGR014W</name>
</gene>
<feature type="signal peptide" evidence="1">
    <location>
        <begin position="1"/>
        <end position="21"/>
    </location>
</feature>
<feature type="chain" id="PRO_0000096589" description="Signaling mucin MSB2">
    <location>
        <begin position="22"/>
        <end position="1306"/>
    </location>
</feature>
<feature type="topological domain" description="Extracellular" evidence="1">
    <location>
        <begin position="22"/>
        <end position="1185"/>
    </location>
</feature>
<feature type="transmembrane region" description="Helical" evidence="1">
    <location>
        <begin position="1186"/>
        <end position="1206"/>
    </location>
</feature>
<feature type="topological domain" description="Cytoplasmic" evidence="1">
    <location>
        <begin position="1207"/>
        <end position="1306"/>
    </location>
</feature>
<feature type="repeat" description="1">
    <location>
        <begin position="698"/>
        <end position="714"/>
    </location>
</feature>
<feature type="repeat" description="2">
    <location>
        <begin position="715"/>
        <end position="731"/>
    </location>
</feature>
<feature type="repeat" description="3">
    <location>
        <begin position="732"/>
        <end position="748"/>
    </location>
</feature>
<feature type="repeat" description="4">
    <location>
        <begin position="749"/>
        <end position="765"/>
    </location>
</feature>
<feature type="repeat" description="5">
    <location>
        <begin position="766"/>
        <end position="782"/>
    </location>
</feature>
<feature type="repeat" description="6">
    <location>
        <begin position="783"/>
        <end position="799"/>
    </location>
</feature>
<feature type="repeat" description="7">
    <location>
        <begin position="800"/>
        <end position="816"/>
    </location>
</feature>
<feature type="region of interest" description="Disordered" evidence="2">
    <location>
        <begin position="248"/>
        <end position="267"/>
    </location>
</feature>
<feature type="region of interest" description="Disordered" evidence="2">
    <location>
        <begin position="519"/>
        <end position="539"/>
    </location>
</feature>
<feature type="region of interest" description="Disordered" evidence="2">
    <location>
        <begin position="561"/>
        <end position="580"/>
    </location>
</feature>
<feature type="region of interest" description="Disordered" evidence="2">
    <location>
        <begin position="665"/>
        <end position="685"/>
    </location>
</feature>
<feature type="region of interest" description="7 X 17 AA tandem repeats">
    <location>
        <begin position="698"/>
        <end position="816"/>
    </location>
</feature>
<feature type="region of interest" description="Disordered" evidence="2">
    <location>
        <begin position="709"/>
        <end position="849"/>
    </location>
</feature>
<feature type="region of interest" description="Disordered" evidence="2">
    <location>
        <begin position="1123"/>
        <end position="1158"/>
    </location>
</feature>
<feature type="region of interest" description="Disordered" evidence="2">
    <location>
        <begin position="1272"/>
        <end position="1291"/>
    </location>
</feature>
<feature type="compositionally biased region" description="Polar residues" evidence="2">
    <location>
        <begin position="519"/>
        <end position="528"/>
    </location>
</feature>
<feature type="compositionally biased region" description="Low complexity" evidence="2">
    <location>
        <begin position="529"/>
        <end position="539"/>
    </location>
</feature>
<feature type="compositionally biased region" description="Low complexity" evidence="2">
    <location>
        <begin position="665"/>
        <end position="674"/>
    </location>
</feature>
<feature type="compositionally biased region" description="Low complexity" evidence="2">
    <location>
        <begin position="709"/>
        <end position="831"/>
    </location>
</feature>
<feature type="modified residue" description="Phosphoserine" evidence="11">
    <location>
        <position position="1300"/>
    </location>
</feature>
<feature type="glycosylation site" description="N-linked (GlcNAc...) asparagine" evidence="1">
    <location>
        <position position="30"/>
    </location>
</feature>
<feature type="glycosylation site" description="N-linked (GlcNAc...) asparagine" evidence="1">
    <location>
        <position position="859"/>
    </location>
</feature>
<feature type="glycosylation site" description="N-linked (GlcNAc...) asparagine" evidence="1">
    <location>
        <position position="885"/>
    </location>
</feature>
<feature type="glycosylation site" description="N-linked (GlcNAc...) asparagine" evidence="1">
    <location>
        <position position="945"/>
    </location>
</feature>
<feature type="glycosylation site" description="N-linked (GlcNAc...) asparagine" evidence="1">
    <location>
        <position position="1049"/>
    </location>
</feature>
<feature type="glycosylation site" description="N-linked (GlcNAc...) asparagine" evidence="1">
    <location>
        <position position="1088"/>
    </location>
</feature>
<feature type="glycosylation site" description="N-linked (GlcNAc...) asparagine" evidence="1">
    <location>
        <position position="1175"/>
    </location>
</feature>
<evidence type="ECO:0000255" key="1"/>
<evidence type="ECO:0000256" key="2">
    <source>
        <dbReference type="SAM" id="MobiDB-lite"/>
    </source>
</evidence>
<evidence type="ECO:0000269" key="3">
    <source>
    </source>
</evidence>
<evidence type="ECO:0000269" key="4">
    <source>
    </source>
</evidence>
<evidence type="ECO:0000269" key="5">
    <source>
    </source>
</evidence>
<evidence type="ECO:0000269" key="6">
    <source>
    </source>
</evidence>
<evidence type="ECO:0000269" key="7">
    <source>
    </source>
</evidence>
<evidence type="ECO:0000269" key="8">
    <source>
    </source>
</evidence>
<evidence type="ECO:0000269" key="9">
    <source>
    </source>
</evidence>
<evidence type="ECO:0000305" key="10"/>
<evidence type="ECO:0007744" key="11">
    <source>
    </source>
</evidence>
<reference key="1">
    <citation type="journal article" date="1992" name="Yeast">
        <title>A Ser/Thr-rich multicopy suppressor of a cdc24 bud emergence defect.</title>
        <authorList>
            <person name="Bender A."/>
            <person name="Pringle J.R."/>
        </authorList>
    </citation>
    <scope>NUCLEOTIDE SEQUENCE [GENOMIC DNA]</scope>
    <scope>FUNCTION</scope>
</reference>
<reference key="2">
    <citation type="journal article" date="1997" name="Yeast">
        <title>Sequence analysis of 203 kilobases from Saccharomyces cerevisiae chromosome VII.</title>
        <authorList>
            <person name="Rieger M."/>
            <person name="Brueckner M."/>
            <person name="Schaefer M."/>
            <person name="Mueller-Auer S."/>
        </authorList>
    </citation>
    <scope>NUCLEOTIDE SEQUENCE [GENOMIC DNA]</scope>
    <source>
        <strain>ATCC 204508 / S288c</strain>
    </source>
</reference>
<reference key="3">
    <citation type="journal article" date="1997" name="Nature">
        <title>The nucleotide sequence of Saccharomyces cerevisiae chromosome VII.</title>
        <authorList>
            <person name="Tettelin H."/>
            <person name="Agostoni-Carbone M.L."/>
            <person name="Albermann K."/>
            <person name="Albers M."/>
            <person name="Arroyo J."/>
            <person name="Backes U."/>
            <person name="Barreiros T."/>
            <person name="Bertani I."/>
            <person name="Bjourson A.J."/>
            <person name="Brueckner M."/>
            <person name="Bruschi C.V."/>
            <person name="Carignani G."/>
            <person name="Castagnoli L."/>
            <person name="Cerdan E."/>
            <person name="Clemente M.L."/>
            <person name="Coblenz A."/>
            <person name="Coglievina M."/>
            <person name="Coissac E."/>
            <person name="Defoor E."/>
            <person name="Del Bino S."/>
            <person name="Delius H."/>
            <person name="Delneri D."/>
            <person name="de Wergifosse P."/>
            <person name="Dujon B."/>
            <person name="Durand P."/>
            <person name="Entian K.-D."/>
            <person name="Eraso P."/>
            <person name="Escribano V."/>
            <person name="Fabiani L."/>
            <person name="Fartmann B."/>
            <person name="Feroli F."/>
            <person name="Feuermann M."/>
            <person name="Frontali L."/>
            <person name="Garcia-Gonzalez M."/>
            <person name="Garcia-Saez M.I."/>
            <person name="Goffeau A."/>
            <person name="Guerreiro P."/>
            <person name="Hani J."/>
            <person name="Hansen M."/>
            <person name="Hebling U."/>
            <person name="Hernandez K."/>
            <person name="Heumann K."/>
            <person name="Hilger F."/>
            <person name="Hofmann B."/>
            <person name="Indge K.J."/>
            <person name="James C.M."/>
            <person name="Klima R."/>
            <person name="Koetter P."/>
            <person name="Kramer B."/>
            <person name="Kramer W."/>
            <person name="Lauquin G."/>
            <person name="Leuther H."/>
            <person name="Louis E.J."/>
            <person name="Maillier E."/>
            <person name="Marconi A."/>
            <person name="Martegani E."/>
            <person name="Mazon M.J."/>
            <person name="Mazzoni C."/>
            <person name="McReynolds A.D.K."/>
            <person name="Melchioretto P."/>
            <person name="Mewes H.-W."/>
            <person name="Minenkova O."/>
            <person name="Mueller-Auer S."/>
            <person name="Nawrocki A."/>
            <person name="Netter P."/>
            <person name="Neu R."/>
            <person name="Nombela C."/>
            <person name="Oliver S.G."/>
            <person name="Panzeri L."/>
            <person name="Paoluzi S."/>
            <person name="Plevani P."/>
            <person name="Portetelle D."/>
            <person name="Portillo F."/>
            <person name="Potier S."/>
            <person name="Purnelle B."/>
            <person name="Rieger M."/>
            <person name="Riles L."/>
            <person name="Rinaldi T."/>
            <person name="Robben J."/>
            <person name="Rodrigues-Pousada C."/>
            <person name="Rodriguez-Belmonte E."/>
            <person name="Rodriguez-Torres A.M."/>
            <person name="Rose M."/>
            <person name="Ruzzi M."/>
            <person name="Saliola M."/>
            <person name="Sanchez-Perez M."/>
            <person name="Schaefer B."/>
            <person name="Schaefer M."/>
            <person name="Scharfe M."/>
            <person name="Schmidheini T."/>
            <person name="Schreer A."/>
            <person name="Skala J."/>
            <person name="Souciet J.-L."/>
            <person name="Steensma H.Y."/>
            <person name="Talla E."/>
            <person name="Thierry A."/>
            <person name="Vandenbol M."/>
            <person name="van der Aart Q.J.M."/>
            <person name="Van Dyck L."/>
            <person name="Vanoni M."/>
            <person name="Verhasselt P."/>
            <person name="Voet M."/>
            <person name="Volckaert G."/>
            <person name="Wambutt R."/>
            <person name="Watson M.D."/>
            <person name="Weber N."/>
            <person name="Wedler E."/>
            <person name="Wedler H."/>
            <person name="Wipfli P."/>
            <person name="Wolf K."/>
            <person name="Wright L.F."/>
            <person name="Zaccaria P."/>
            <person name="Zimmermann M."/>
            <person name="Zollner A."/>
            <person name="Kleine K."/>
        </authorList>
    </citation>
    <scope>NUCLEOTIDE SEQUENCE [LARGE SCALE GENOMIC DNA]</scope>
    <source>
        <strain>ATCC 204508 / S288c</strain>
    </source>
</reference>
<reference key="4">
    <citation type="journal article" date="2014" name="G3 (Bethesda)">
        <title>The reference genome sequence of Saccharomyces cerevisiae: Then and now.</title>
        <authorList>
            <person name="Engel S.R."/>
            <person name="Dietrich F.S."/>
            <person name="Fisk D.G."/>
            <person name="Binkley G."/>
            <person name="Balakrishnan R."/>
            <person name="Costanzo M.C."/>
            <person name="Dwight S.S."/>
            <person name="Hitz B.C."/>
            <person name="Karra K."/>
            <person name="Nash R.S."/>
            <person name="Weng S."/>
            <person name="Wong E.D."/>
            <person name="Lloyd P."/>
            <person name="Skrzypek M.S."/>
            <person name="Miyasato S.R."/>
            <person name="Simison M."/>
            <person name="Cherry J.M."/>
        </authorList>
    </citation>
    <scope>GENOME REANNOTATION</scope>
    <source>
        <strain>ATCC 204508 / S288c</strain>
    </source>
</reference>
<reference key="5">
    <citation type="journal article" date="1989" name="Proc. Natl. Acad. Sci. U.S.A.">
        <title>Multicopy suppression of the cdc24 budding defect in yeast by CDC42 and three newly identified genes including the ras-related gene RSR1.</title>
        <authorList>
            <person name="Bender A."/>
            <person name="Pringle J.R."/>
        </authorList>
    </citation>
    <scope>FUNCTION</scope>
</reference>
<reference key="6">
    <citation type="journal article" date="2002" name="Mol. Cell. Biol.">
        <title>A third osmosensing branch in Saccharomyces cerevisiae requires the Msb2 protein and functions in parallel with the Sho1 branch.</title>
        <authorList>
            <person name="O'Rourke S.M."/>
            <person name="Herskowitz I."/>
        </authorList>
    </citation>
    <scope>FUNCTION</scope>
</reference>
<reference key="7">
    <citation type="journal article" date="2003" name="Nature">
        <title>Global analysis of protein expression in yeast.</title>
        <authorList>
            <person name="Ghaemmaghami S."/>
            <person name="Huh W.-K."/>
            <person name="Bower K."/>
            <person name="Howson R.W."/>
            <person name="Belle A."/>
            <person name="Dephoure N."/>
            <person name="O'Shea E.K."/>
            <person name="Weissman J.S."/>
        </authorList>
    </citation>
    <scope>LEVEL OF PROTEIN EXPRESSION [LARGE SCALE ANALYSIS]</scope>
</reference>
<reference key="8">
    <citation type="journal article" date="2004" name="Genes Dev.">
        <title>A signaling mucin at the head of the Cdc42- and MAPK-dependent filamentous growth pathway in yeast.</title>
        <authorList>
            <person name="Cullen P.J."/>
            <person name="Sabbagh W. Jr."/>
            <person name="Graham E."/>
            <person name="Irick M.M."/>
            <person name="van Olden E.K."/>
            <person name="Neal C."/>
            <person name="Delrow J."/>
            <person name="Bardwell L."/>
            <person name="Sprague G.F. Jr."/>
        </authorList>
    </citation>
    <scope>FUNCTION</scope>
    <scope>SUBCELLULAR LOCATION</scope>
    <scope>INTERACTION WITH CDC42 AND SHO1</scope>
</reference>
<reference key="9">
    <citation type="journal article" date="2005" name="Mol. Cell. Biol.">
        <title>Mitogen-activated protein kinases with distinct requirements for Ste5 scaffolding influence signaling specificity in Saccharomyces cerevisiae.</title>
        <authorList>
            <person name="Flatauer L.J."/>
            <person name="Zadeh S.F."/>
            <person name="Bardwell L."/>
        </authorList>
    </citation>
    <scope>FUNCTION</scope>
</reference>
<reference key="10">
    <citation type="journal article" date="2009" name="Mol. Biol. Cell">
        <title>The signaling mucins Msb2 and Hkr1 differentially regulate the filamentation mitogen-activated protein kinase pathway and contribute to a multimodal response.</title>
        <authorList>
            <person name="Pitoniak A."/>
            <person name="Birkaya B."/>
            <person name="Dionne H.M."/>
            <person name="Vadaie N."/>
            <person name="Cullen P.J."/>
        </authorList>
    </citation>
    <scope>FUNCTION</scope>
</reference>
<reference key="11">
    <citation type="journal article" date="2009" name="Science">
        <title>Global analysis of Cdk1 substrate phosphorylation sites provides insights into evolution.</title>
        <authorList>
            <person name="Holt L.J."/>
            <person name="Tuch B.B."/>
            <person name="Villen J."/>
            <person name="Johnson A.D."/>
            <person name="Gygi S.P."/>
            <person name="Morgan D.O."/>
        </authorList>
    </citation>
    <scope>PHOSPHORYLATION [LARGE SCALE ANALYSIS] AT SER-1300</scope>
    <scope>IDENTIFICATION BY MASS SPECTROMETRY [LARGE SCALE ANALYSIS]</scope>
</reference>
<proteinExistence type="evidence at protein level"/>
<accession>P32334</accession>
<accession>D6VUF0</accession>